<name>YEL1_YEAST</name>
<evidence type="ECO:0000255" key="1">
    <source>
        <dbReference type="PROSITE-ProRule" id="PRU00189"/>
    </source>
</evidence>
<evidence type="ECO:0000256" key="2">
    <source>
        <dbReference type="SAM" id="MobiDB-lite"/>
    </source>
</evidence>
<evidence type="ECO:0000269" key="3">
    <source>
    </source>
</evidence>
<evidence type="ECO:0000269" key="4">
    <source>
    </source>
</evidence>
<evidence type="ECO:0000269" key="5">
    <source>
    </source>
</evidence>
<evidence type="ECO:0000305" key="6"/>
<evidence type="ECO:0007744" key="7">
    <source>
    </source>
</evidence>
<evidence type="ECO:0007744" key="8">
    <source>
    </source>
</evidence>
<dbReference type="EMBL" id="Z23261">
    <property type="protein sequence ID" value="CAA80787.1"/>
    <property type="molecule type" value="Genomic_DNA"/>
</dbReference>
<dbReference type="EMBL" id="Z35821">
    <property type="protein sequence ID" value="CAA84880.1"/>
    <property type="molecule type" value="Genomic_DNA"/>
</dbReference>
<dbReference type="EMBL" id="BK006936">
    <property type="protein sequence ID" value="DAA07059.1"/>
    <property type="molecule type" value="Genomic_DNA"/>
</dbReference>
<dbReference type="PIR" id="S39828">
    <property type="entry name" value="S39828"/>
</dbReference>
<dbReference type="RefSeq" id="NP_009493.1">
    <property type="nucleotide sequence ID" value="NM_001178300.1"/>
</dbReference>
<dbReference type="SMR" id="P34225"/>
<dbReference type="BioGRID" id="32638">
    <property type="interactions" value="60"/>
</dbReference>
<dbReference type="FunCoup" id="P34225">
    <property type="interactions" value="32"/>
</dbReference>
<dbReference type="IntAct" id="P34225">
    <property type="interactions" value="3"/>
</dbReference>
<dbReference type="MINT" id="P34225"/>
<dbReference type="STRING" id="4932.YBL060W"/>
<dbReference type="iPTMnet" id="P34225"/>
<dbReference type="PaxDb" id="4932-YBL060W"/>
<dbReference type="PeptideAtlas" id="P34225"/>
<dbReference type="EnsemblFungi" id="YBL060W_mRNA">
    <property type="protein sequence ID" value="YBL060W"/>
    <property type="gene ID" value="YBL060W"/>
</dbReference>
<dbReference type="GeneID" id="852219"/>
<dbReference type="KEGG" id="sce:YBL060W"/>
<dbReference type="AGR" id="SGD:S000000156"/>
<dbReference type="SGD" id="S000000156">
    <property type="gene designation" value="YEL1"/>
</dbReference>
<dbReference type="VEuPathDB" id="FungiDB:YBL060W"/>
<dbReference type="eggNOG" id="KOG0929">
    <property type="taxonomic scope" value="Eukaryota"/>
</dbReference>
<dbReference type="HOGENOM" id="CLU_017717_0_0_1"/>
<dbReference type="InParanoid" id="P34225"/>
<dbReference type="OMA" id="EGRIFIF"/>
<dbReference type="OrthoDB" id="2157641at2759"/>
<dbReference type="BioCyc" id="YEAST:G3O-28958-MONOMER"/>
<dbReference type="BioGRID-ORCS" id="852219">
    <property type="hits" value="1 hit in 10 CRISPR screens"/>
</dbReference>
<dbReference type="PRO" id="PR:P34225"/>
<dbReference type="Proteomes" id="UP000002311">
    <property type="component" value="Chromosome II"/>
</dbReference>
<dbReference type="RNAct" id="P34225">
    <property type="molecule type" value="protein"/>
</dbReference>
<dbReference type="GO" id="GO:0005935">
    <property type="term" value="C:cellular bud neck"/>
    <property type="evidence" value="ECO:0000314"/>
    <property type="project" value="SGD"/>
</dbReference>
<dbReference type="GO" id="GO:0005934">
    <property type="term" value="C:cellular bud tip"/>
    <property type="evidence" value="ECO:0000314"/>
    <property type="project" value="SGD"/>
</dbReference>
<dbReference type="GO" id="GO:0005737">
    <property type="term" value="C:cytoplasm"/>
    <property type="evidence" value="ECO:0007005"/>
    <property type="project" value="SGD"/>
</dbReference>
<dbReference type="GO" id="GO:0005886">
    <property type="term" value="C:plasma membrane"/>
    <property type="evidence" value="ECO:0007669"/>
    <property type="project" value="UniProtKB-SubCell"/>
</dbReference>
<dbReference type="GO" id="GO:0005085">
    <property type="term" value="F:guanyl-nucleotide exchange factor activity"/>
    <property type="evidence" value="ECO:0000314"/>
    <property type="project" value="SGD"/>
</dbReference>
<dbReference type="GO" id="GO:0051666">
    <property type="term" value="P:actin cortical patch localization"/>
    <property type="evidence" value="ECO:0000315"/>
    <property type="project" value="SGD"/>
</dbReference>
<dbReference type="GO" id="GO:0010513">
    <property type="term" value="P:positive regulation of phosphatidylinositol biosynthetic process"/>
    <property type="evidence" value="ECO:0000315"/>
    <property type="project" value="SGD"/>
</dbReference>
<dbReference type="GO" id="GO:0008104">
    <property type="term" value="P:protein localization"/>
    <property type="evidence" value="ECO:0000315"/>
    <property type="project" value="SGD"/>
</dbReference>
<dbReference type="GO" id="GO:0032012">
    <property type="term" value="P:regulation of ARF protein signal transduction"/>
    <property type="evidence" value="ECO:0007669"/>
    <property type="project" value="InterPro"/>
</dbReference>
<dbReference type="CDD" id="cd00171">
    <property type="entry name" value="Sec7"/>
    <property type="match status" value="1"/>
</dbReference>
<dbReference type="Gene3D" id="1.10.1000.11">
    <property type="entry name" value="Arf Nucleotide-binding Site Opener,domain 2"/>
    <property type="match status" value="1"/>
</dbReference>
<dbReference type="InterPro" id="IPR056468">
    <property type="entry name" value="PH_GEF_YEL1"/>
</dbReference>
<dbReference type="InterPro" id="IPR023394">
    <property type="entry name" value="Sec7_C_sf"/>
</dbReference>
<dbReference type="InterPro" id="IPR000904">
    <property type="entry name" value="Sec7_dom"/>
</dbReference>
<dbReference type="InterPro" id="IPR035999">
    <property type="entry name" value="Sec7_dom_sf"/>
</dbReference>
<dbReference type="Pfam" id="PF23633">
    <property type="entry name" value="PH_GEF_YEL1"/>
    <property type="match status" value="1"/>
</dbReference>
<dbReference type="Pfam" id="PF01369">
    <property type="entry name" value="Sec7"/>
    <property type="match status" value="1"/>
</dbReference>
<dbReference type="SMART" id="SM00222">
    <property type="entry name" value="Sec7"/>
    <property type="match status" value="1"/>
</dbReference>
<dbReference type="SUPFAM" id="SSF48425">
    <property type="entry name" value="Sec7 domain"/>
    <property type="match status" value="1"/>
</dbReference>
<dbReference type="PROSITE" id="PS50190">
    <property type="entry name" value="SEC7"/>
    <property type="match status" value="1"/>
</dbReference>
<reference key="1">
    <citation type="journal article" date="1993" name="Yeast">
        <title>Sequencing and functional analysis of a 32,560 bp segment on the left arm of yeast chromosome II. Identification of 26 open reading frames, including the KIP1 and SEC17 genes.</title>
        <authorList>
            <person name="Scherens B."/>
            <person name="el Bakkoury M."/>
            <person name="Vierendeels F."/>
            <person name="Dubois E."/>
            <person name="Messenguy F."/>
        </authorList>
    </citation>
    <scope>NUCLEOTIDE SEQUENCE [GENOMIC DNA]</scope>
    <source>
        <strain>ATCC 204508 / S288c</strain>
    </source>
</reference>
<reference key="2">
    <citation type="journal article" date="1994" name="EMBO J.">
        <title>Complete DNA sequence of yeast chromosome II.</title>
        <authorList>
            <person name="Feldmann H."/>
            <person name="Aigle M."/>
            <person name="Aljinovic G."/>
            <person name="Andre B."/>
            <person name="Baclet M.C."/>
            <person name="Barthe C."/>
            <person name="Baur A."/>
            <person name="Becam A.-M."/>
            <person name="Biteau N."/>
            <person name="Boles E."/>
            <person name="Brandt T."/>
            <person name="Brendel M."/>
            <person name="Brueckner M."/>
            <person name="Bussereau F."/>
            <person name="Christiansen C."/>
            <person name="Contreras R."/>
            <person name="Crouzet M."/>
            <person name="Cziepluch C."/>
            <person name="Demolis N."/>
            <person name="Delaveau T."/>
            <person name="Doignon F."/>
            <person name="Domdey H."/>
            <person name="Duesterhus S."/>
            <person name="Dubois E."/>
            <person name="Dujon B."/>
            <person name="El Bakkoury M."/>
            <person name="Entian K.-D."/>
            <person name="Feuermann M."/>
            <person name="Fiers W."/>
            <person name="Fobo G.M."/>
            <person name="Fritz C."/>
            <person name="Gassenhuber J."/>
            <person name="Glansdorff N."/>
            <person name="Goffeau A."/>
            <person name="Grivell L.A."/>
            <person name="de Haan M."/>
            <person name="Hein C."/>
            <person name="Herbert C.J."/>
            <person name="Hollenberg C.P."/>
            <person name="Holmstroem K."/>
            <person name="Jacq C."/>
            <person name="Jacquet M."/>
            <person name="Jauniaux J.-C."/>
            <person name="Jonniaux J.-L."/>
            <person name="Kallesoee T."/>
            <person name="Kiesau P."/>
            <person name="Kirchrath L."/>
            <person name="Koetter P."/>
            <person name="Korol S."/>
            <person name="Liebl S."/>
            <person name="Logghe M."/>
            <person name="Lohan A.J.E."/>
            <person name="Louis E.J."/>
            <person name="Li Z.Y."/>
            <person name="Maat M.J."/>
            <person name="Mallet L."/>
            <person name="Mannhaupt G."/>
            <person name="Messenguy F."/>
            <person name="Miosga T."/>
            <person name="Molemans F."/>
            <person name="Mueller S."/>
            <person name="Nasr F."/>
            <person name="Obermaier B."/>
            <person name="Perea J."/>
            <person name="Pierard A."/>
            <person name="Piravandi E."/>
            <person name="Pohl F.M."/>
            <person name="Pohl T.M."/>
            <person name="Potier S."/>
            <person name="Proft M."/>
            <person name="Purnelle B."/>
            <person name="Ramezani Rad M."/>
            <person name="Rieger M."/>
            <person name="Rose M."/>
            <person name="Schaaff-Gerstenschlaeger I."/>
            <person name="Scherens B."/>
            <person name="Schwarzlose C."/>
            <person name="Skala J."/>
            <person name="Slonimski P.P."/>
            <person name="Smits P.H.M."/>
            <person name="Souciet J.-L."/>
            <person name="Steensma H.Y."/>
            <person name="Stucka R."/>
            <person name="Urrestarazu L.A."/>
            <person name="van der Aart Q.J.M."/>
            <person name="Van Dyck L."/>
            <person name="Vassarotti A."/>
            <person name="Vetter I."/>
            <person name="Vierendeels F."/>
            <person name="Vissers S."/>
            <person name="Wagner G."/>
            <person name="de Wergifosse P."/>
            <person name="Wolfe K.H."/>
            <person name="Zagulski M."/>
            <person name="Zimmermann F.K."/>
            <person name="Mewes H.-W."/>
            <person name="Kleine K."/>
        </authorList>
    </citation>
    <scope>NUCLEOTIDE SEQUENCE [LARGE SCALE GENOMIC DNA]</scope>
    <source>
        <strain>ATCC 204508 / S288c</strain>
    </source>
</reference>
<reference key="3">
    <citation type="journal article" date="2014" name="G3 (Bethesda)">
        <title>The reference genome sequence of Saccharomyces cerevisiae: Then and now.</title>
        <authorList>
            <person name="Engel S.R."/>
            <person name="Dietrich F.S."/>
            <person name="Fisk D.G."/>
            <person name="Binkley G."/>
            <person name="Balakrishnan R."/>
            <person name="Costanzo M.C."/>
            <person name="Dwight S.S."/>
            <person name="Hitz B.C."/>
            <person name="Karra K."/>
            <person name="Nash R.S."/>
            <person name="Weng S."/>
            <person name="Wong E.D."/>
            <person name="Lloyd P."/>
            <person name="Skrzypek M.S."/>
            <person name="Miyasato S.R."/>
            <person name="Simison M."/>
            <person name="Cherry J.M."/>
        </authorList>
    </citation>
    <scope>GENOME REANNOTATION</scope>
    <source>
        <strain>ATCC 204508 / S288c</strain>
    </source>
</reference>
<reference key="4">
    <citation type="journal article" date="2003" name="Nature">
        <title>Global analysis of protein localization in budding yeast.</title>
        <authorList>
            <person name="Huh W.-K."/>
            <person name="Falvo J.V."/>
            <person name="Gerke L.C."/>
            <person name="Carroll A.S."/>
            <person name="Howson R.W."/>
            <person name="Weissman J.S."/>
            <person name="O'Shea E.K."/>
        </authorList>
    </citation>
    <scope>SUBCELLULAR LOCATION [LARGE SCALE ANALYSIS]</scope>
</reference>
<reference key="5">
    <citation type="journal article" date="2007" name="J. Proteome Res.">
        <title>Large-scale phosphorylation analysis of alpha-factor-arrested Saccharomyces cerevisiae.</title>
        <authorList>
            <person name="Li X."/>
            <person name="Gerber S.A."/>
            <person name="Rudner A.D."/>
            <person name="Beausoleil S.A."/>
            <person name="Haas W."/>
            <person name="Villen J."/>
            <person name="Elias J.E."/>
            <person name="Gygi S.P."/>
        </authorList>
    </citation>
    <scope>IDENTIFICATION BY MASS SPECTROMETRY [LARGE SCALE ANALYSIS]</scope>
    <source>
        <strain>ADR376</strain>
    </source>
</reference>
<reference key="6">
    <citation type="journal article" date="2007" name="PLoS ONE">
        <title>Identification of a guanine nucleotide exchange factor for Arf3, the yeast orthologue of mammalian Arf6.</title>
        <authorList>
            <person name="Gillingham A.K."/>
            <person name="Munro S."/>
        </authorList>
    </citation>
    <scope>FUNCTION</scope>
    <scope>SUBCELLULAR LOCATION</scope>
</reference>
<reference key="7">
    <citation type="journal article" date="2008" name="J. Biol. Chem.">
        <title>Afi1p functions as an Arf3p polarization-specific docking factor for development of polarity.</title>
        <authorList>
            <person name="Tsai P.-C."/>
            <person name="Lee S.-W."/>
            <person name="Liu Y.-W."/>
            <person name="Chu C.-W."/>
            <person name="Chen K.-Y."/>
            <person name="Ho J.-C."/>
            <person name="Lee F.-J."/>
        </authorList>
    </citation>
    <scope>FUNCTION</scope>
    <scope>SUBCELLULAR LOCATION</scope>
</reference>
<reference key="8">
    <citation type="journal article" date="2008" name="Mol. Cell. Proteomics">
        <title>A multidimensional chromatography technology for in-depth phosphoproteome analysis.</title>
        <authorList>
            <person name="Albuquerque C.P."/>
            <person name="Smolka M.B."/>
            <person name="Payne S.H."/>
            <person name="Bafna V."/>
            <person name="Eng J."/>
            <person name="Zhou H."/>
        </authorList>
    </citation>
    <scope>PHOSPHORYLATION [LARGE SCALE ANALYSIS] AT SER-293</scope>
    <scope>IDENTIFICATION BY MASS SPECTROMETRY [LARGE SCALE ANALYSIS]</scope>
</reference>
<reference key="9">
    <citation type="journal article" date="2008" name="Traffic">
        <title>Yeast Arf3p modulates plasma membrane PtdIns(4,5)P2 levels to facilitate endocytosis.</title>
        <authorList>
            <person name="Smaczynska-de Rooij I.I."/>
            <person name="Costa R."/>
            <person name="Ayscough K.R."/>
        </authorList>
    </citation>
    <scope>FUNCTION</scope>
    <scope>SUBCELLULAR LOCATION</scope>
</reference>
<reference key="10">
    <citation type="journal article" date="2009" name="Science">
        <title>Global analysis of Cdk1 substrate phosphorylation sites provides insights into evolution.</title>
        <authorList>
            <person name="Holt L.J."/>
            <person name="Tuch B.B."/>
            <person name="Villen J."/>
            <person name="Johnson A.D."/>
            <person name="Gygi S.P."/>
            <person name="Morgan D.O."/>
        </authorList>
    </citation>
    <scope>PHOSPHORYLATION [LARGE SCALE ANALYSIS] AT THR-290; SER-293 AND SER-299</scope>
    <scope>IDENTIFICATION BY MASS SPECTROMETRY [LARGE SCALE ANALYSIS]</scope>
</reference>
<protein>
    <recommendedName>
        <fullName>Guanine-nucleotide exchange factor YEL1</fullName>
    </recommendedName>
    <alternativeName>
        <fullName>EFA6-like protein 1</fullName>
    </alternativeName>
</protein>
<keyword id="KW-1003">Cell membrane</keyword>
<keyword id="KW-0963">Cytoplasm</keyword>
<keyword id="KW-0344">Guanine-nucleotide releasing factor</keyword>
<keyword id="KW-0472">Membrane</keyword>
<keyword id="KW-0597">Phosphoprotein</keyword>
<keyword id="KW-1185">Reference proteome</keyword>
<proteinExistence type="evidence at protein level"/>
<sequence length="687" mass="78768">MCASLNEVKKNDTYGVSQKGYNDNFSESEGVLHGSKSMPTSMKNMLQSPTMVNMCDILQNKEAANDEKPVIPTTDTATAGTGTEDISSTQSEETDQNSHLIASEILEGTFKDVSYKEYANFLGNDNNNQVLTEFVKLLSPLPSSLLETLFNLSKSIYFIAEAQNIDRILECLSIEWIACHPNTHWKSGYKSCHIVLFSLLILNSDLHNNFQVDHKKIKFSMVAFINNTLRALREENEYEELKIYSREHLIIEELSEYYKTLNETPLPLCTESRTSINISDNQSSLKRFSTLGSREFSTSNLRSVNSNSTTLYSRDGQVSVREMSAKSNKNFHNNHPMDALYLKESFDDGLITENGSSWFMDDLILISKKSLPRKYSKRDKDQVAAPKMTSKRNKSFFGWLKPSKTTTLIEHTSRRTSLSYLNKDSEWERVKIQVKEGRIFIFKIKPDVKDIIQSSETDSATIDYFKDISSSYFAYSLLEAEAHVVQDNIIIGSGAMKSNVCNKNTKRKSGNFTVSFPENINGPKLVLEFQTRSVEEAHKFMDCINFWAGRISPVPLTQFEAVSNAEYGWSDKILTEHASLNLKNIVVSEWKPLLGLELLYEDAKDVEMVELKERLKELMNFTRQLGIWIDKHNEIKDKLVEIWSFDDNYFEAVMNNWNSRYLYMNNQYKKRLSYLKALQKAMGSVQF</sequence>
<gene>
    <name type="primary">YEL1</name>
    <name type="ordered locus">YBL060W</name>
    <name type="ORF">YBL0507</name>
    <name type="ORF">YBL0517</name>
</gene>
<accession>P34225</accession>
<accession>D6VPT9</accession>
<feature type="chain" id="PRO_0000120222" description="Guanine-nucleotide exchange factor YEL1">
    <location>
        <begin position="1"/>
        <end position="687"/>
    </location>
</feature>
<feature type="domain" description="SEC7" evidence="1">
    <location>
        <begin position="61"/>
        <end position="266"/>
    </location>
</feature>
<feature type="domain" description="PH">
    <location>
        <begin position="412"/>
        <end position="551"/>
    </location>
</feature>
<feature type="region of interest" description="Disordered" evidence="2">
    <location>
        <begin position="14"/>
        <end position="35"/>
    </location>
</feature>
<feature type="region of interest" description="Disordered" evidence="2">
    <location>
        <begin position="63"/>
        <end position="97"/>
    </location>
</feature>
<feature type="compositionally biased region" description="Polar residues" evidence="2">
    <location>
        <begin position="14"/>
        <end position="27"/>
    </location>
</feature>
<feature type="compositionally biased region" description="Low complexity" evidence="2">
    <location>
        <begin position="73"/>
        <end position="83"/>
    </location>
</feature>
<feature type="modified residue" description="Phosphothreonine" evidence="8">
    <location>
        <position position="290"/>
    </location>
</feature>
<feature type="modified residue" description="Phosphoserine" evidence="7 8">
    <location>
        <position position="293"/>
    </location>
</feature>
<feature type="modified residue" description="Phosphoserine" evidence="8">
    <location>
        <position position="299"/>
    </location>
</feature>
<organism>
    <name type="scientific">Saccharomyces cerevisiae (strain ATCC 204508 / S288c)</name>
    <name type="common">Baker's yeast</name>
    <dbReference type="NCBI Taxonomy" id="559292"/>
    <lineage>
        <taxon>Eukaryota</taxon>
        <taxon>Fungi</taxon>
        <taxon>Dikarya</taxon>
        <taxon>Ascomycota</taxon>
        <taxon>Saccharomycotina</taxon>
        <taxon>Saccharomycetes</taxon>
        <taxon>Saccharomycetales</taxon>
        <taxon>Saccharomycetaceae</taxon>
        <taxon>Saccharomyces</taxon>
    </lineage>
</organism>
<comment type="function">
    <text evidence="3 4 5">Guanine-nucleotide exchange factor for ARF3 required for localization of ARF3 to the bud neck and tip and involved in actin patch polarization.</text>
</comment>
<comment type="subcellular location">
    <subcellularLocation>
        <location>Cytoplasm</location>
    </subcellularLocation>
    <subcellularLocation>
        <location>Cell membrane</location>
        <topology>Peripheral membrane protein</topology>
    </subcellularLocation>
    <subcellularLocation>
        <location>Bud neck</location>
    </subcellularLocation>
    <subcellularLocation>
        <location>Bud tip</location>
    </subcellularLocation>
    <text>Localizes at the cell membrane only at the bud neck and bud tip and this localization is ARF3-dependent.</text>
</comment>
<comment type="similarity">
    <text evidence="6">Belongs to the YEL1 family.</text>
</comment>